<sequence>MNAWEVNFDGLVGLTHHYAGLSFGNEASTRHRFQISNPRLAAKQGLLKMKNLADAGFPQAVIPPHERPFIPVLRQLGFSGSDEQVLEKVARQAPHWLSSVSSASPMWVANAATIAPSADTLDGKVHLTIANLNNKFHRSLEAPVTESLLKAIFDDEEKFSVHSALPQVALLGDEGAANHNRLGGHYGEPGMQLFVYGREEGNDTRPSRYPARQTREASEAVARLNQVNPQQVIFAQQNPDVIDQGVFHNDVIAVSNRQVLFCHQQAFARQVQLLANLRARVNGFMAIEVPATQVSVSDAVSTYLFNSQLLSRDDGSMMLVLPQECREHAGVWGYLNELLVADNPISELKVFDLRESMANGGGPACLRLRVVLTEEERRAVNPAVMMNDTLFNALNDWVDRYYRDRLTAADLADPQLLREGREALDVLSQLLNLGSVYPFQREGGGNG</sequence>
<protein>
    <recommendedName>
        <fullName evidence="1">N-succinylarginine dihydrolase</fullName>
        <ecNumber evidence="1">3.5.3.23</ecNumber>
    </recommendedName>
</protein>
<gene>
    <name evidence="1" type="primary">astB</name>
    <name type="ordered locus">EcSMS35_1446</name>
</gene>
<feature type="chain" id="PRO_1000138016" description="N-succinylarginine dihydrolase">
    <location>
        <begin position="1"/>
        <end position="447"/>
    </location>
</feature>
<feature type="active site" evidence="1">
    <location>
        <position position="174"/>
    </location>
</feature>
<feature type="active site" evidence="1">
    <location>
        <position position="248"/>
    </location>
</feature>
<feature type="active site" description="Nucleophile" evidence="1">
    <location>
        <position position="365"/>
    </location>
</feature>
<feature type="binding site" evidence="1">
    <location>
        <begin position="19"/>
        <end position="28"/>
    </location>
    <ligand>
        <name>substrate</name>
    </ligand>
</feature>
<feature type="binding site" evidence="1">
    <location>
        <position position="110"/>
    </location>
    <ligand>
        <name>substrate</name>
    </ligand>
</feature>
<feature type="binding site" evidence="1">
    <location>
        <begin position="137"/>
        <end position="138"/>
    </location>
    <ligand>
        <name>substrate</name>
    </ligand>
</feature>
<feature type="binding site" evidence="1">
    <location>
        <position position="212"/>
    </location>
    <ligand>
        <name>substrate</name>
    </ligand>
</feature>
<feature type="binding site" evidence="1">
    <location>
        <position position="250"/>
    </location>
    <ligand>
        <name>substrate</name>
    </ligand>
</feature>
<feature type="binding site" evidence="1">
    <location>
        <position position="359"/>
    </location>
    <ligand>
        <name>substrate</name>
    </ligand>
</feature>
<keyword id="KW-0056">Arginine metabolism</keyword>
<keyword id="KW-0378">Hydrolase</keyword>
<organism>
    <name type="scientific">Escherichia coli (strain SMS-3-5 / SECEC)</name>
    <dbReference type="NCBI Taxonomy" id="439855"/>
    <lineage>
        <taxon>Bacteria</taxon>
        <taxon>Pseudomonadati</taxon>
        <taxon>Pseudomonadota</taxon>
        <taxon>Gammaproteobacteria</taxon>
        <taxon>Enterobacterales</taxon>
        <taxon>Enterobacteriaceae</taxon>
        <taxon>Escherichia</taxon>
    </lineage>
</organism>
<name>ASTB_ECOSM</name>
<comment type="function">
    <text evidence="1">Catalyzes the hydrolysis of N(2)-succinylarginine into N(2)-succinylornithine, ammonia and CO(2).</text>
</comment>
<comment type="catalytic activity">
    <reaction evidence="1">
        <text>N(2)-succinyl-L-arginine + 2 H2O + 2 H(+) = N(2)-succinyl-L-ornithine + 2 NH4(+) + CO2</text>
        <dbReference type="Rhea" id="RHEA:19533"/>
        <dbReference type="ChEBI" id="CHEBI:15377"/>
        <dbReference type="ChEBI" id="CHEBI:15378"/>
        <dbReference type="ChEBI" id="CHEBI:16526"/>
        <dbReference type="ChEBI" id="CHEBI:28938"/>
        <dbReference type="ChEBI" id="CHEBI:58241"/>
        <dbReference type="ChEBI" id="CHEBI:58514"/>
        <dbReference type="EC" id="3.5.3.23"/>
    </reaction>
</comment>
<comment type="pathway">
    <text evidence="1">Amino-acid degradation; L-arginine degradation via AST pathway; L-glutamate and succinate from L-arginine: step 2/5.</text>
</comment>
<comment type="subunit">
    <text evidence="1">Homodimer.</text>
</comment>
<comment type="similarity">
    <text evidence="1">Belongs to the succinylarginine dihydrolase family.</text>
</comment>
<proteinExistence type="inferred from homology"/>
<accession>B1LDY6</accession>
<dbReference type="EC" id="3.5.3.23" evidence="1"/>
<dbReference type="EMBL" id="CP000970">
    <property type="protein sequence ID" value="ACB17380.1"/>
    <property type="molecule type" value="Genomic_DNA"/>
</dbReference>
<dbReference type="RefSeq" id="WP_000994959.1">
    <property type="nucleotide sequence ID" value="NC_010498.1"/>
</dbReference>
<dbReference type="SMR" id="B1LDY6"/>
<dbReference type="KEGG" id="ecm:EcSMS35_1446"/>
<dbReference type="HOGENOM" id="CLU_053835_0_0_6"/>
<dbReference type="UniPathway" id="UPA00185">
    <property type="reaction ID" value="UER00280"/>
</dbReference>
<dbReference type="Proteomes" id="UP000007011">
    <property type="component" value="Chromosome"/>
</dbReference>
<dbReference type="GO" id="GO:0009015">
    <property type="term" value="F:N-succinylarginine dihydrolase activity"/>
    <property type="evidence" value="ECO:0007669"/>
    <property type="project" value="UniProtKB-UniRule"/>
</dbReference>
<dbReference type="GO" id="GO:0019544">
    <property type="term" value="P:arginine catabolic process to glutamate"/>
    <property type="evidence" value="ECO:0007669"/>
    <property type="project" value="UniProtKB-UniRule"/>
</dbReference>
<dbReference type="GO" id="GO:0019545">
    <property type="term" value="P:arginine catabolic process to succinate"/>
    <property type="evidence" value="ECO:0007669"/>
    <property type="project" value="UniProtKB-UniRule"/>
</dbReference>
<dbReference type="FunFam" id="3.75.10.20:FF:000001">
    <property type="entry name" value="N-succinylarginine dihydrolase"/>
    <property type="match status" value="1"/>
</dbReference>
<dbReference type="Gene3D" id="3.75.10.20">
    <property type="entry name" value="Succinylarginine dihydrolase"/>
    <property type="match status" value="1"/>
</dbReference>
<dbReference type="HAMAP" id="MF_01172">
    <property type="entry name" value="AstB"/>
    <property type="match status" value="1"/>
</dbReference>
<dbReference type="InterPro" id="IPR037031">
    <property type="entry name" value="AstB_sf"/>
</dbReference>
<dbReference type="InterPro" id="IPR007079">
    <property type="entry name" value="SuccinylArg_d-Hdrlase_AstB"/>
</dbReference>
<dbReference type="NCBIfam" id="TIGR03241">
    <property type="entry name" value="arg_catab_astB"/>
    <property type="match status" value="1"/>
</dbReference>
<dbReference type="NCBIfam" id="NF009789">
    <property type="entry name" value="PRK13281.1"/>
    <property type="match status" value="1"/>
</dbReference>
<dbReference type="PANTHER" id="PTHR30420">
    <property type="entry name" value="N-SUCCINYLARGININE DIHYDROLASE"/>
    <property type="match status" value="1"/>
</dbReference>
<dbReference type="PANTHER" id="PTHR30420:SF2">
    <property type="entry name" value="N-SUCCINYLARGININE DIHYDROLASE"/>
    <property type="match status" value="1"/>
</dbReference>
<dbReference type="Pfam" id="PF04996">
    <property type="entry name" value="AstB"/>
    <property type="match status" value="1"/>
</dbReference>
<dbReference type="SUPFAM" id="SSF55909">
    <property type="entry name" value="Pentein"/>
    <property type="match status" value="1"/>
</dbReference>
<evidence type="ECO:0000255" key="1">
    <source>
        <dbReference type="HAMAP-Rule" id="MF_01172"/>
    </source>
</evidence>
<reference key="1">
    <citation type="journal article" date="2008" name="J. Bacteriol.">
        <title>Insights into the environmental resistance gene pool from the genome sequence of the multidrug-resistant environmental isolate Escherichia coli SMS-3-5.</title>
        <authorList>
            <person name="Fricke W.F."/>
            <person name="Wright M.S."/>
            <person name="Lindell A.H."/>
            <person name="Harkins D.M."/>
            <person name="Baker-Austin C."/>
            <person name="Ravel J."/>
            <person name="Stepanauskas R."/>
        </authorList>
    </citation>
    <scope>NUCLEOTIDE SEQUENCE [LARGE SCALE GENOMIC DNA]</scope>
    <source>
        <strain>SMS-3-5 / SECEC</strain>
    </source>
</reference>